<proteinExistence type="inferred from homology"/>
<dbReference type="EC" id="2.7.4.3" evidence="1"/>
<dbReference type="EMBL" id="X83011">
    <property type="protein sequence ID" value="CAA58138.1"/>
    <property type="molecule type" value="Genomic_DNA"/>
</dbReference>
<dbReference type="EMBL" id="AL939121">
    <property type="protein sequence ID" value="CAD55214.1"/>
    <property type="molecule type" value="Genomic_DNA"/>
</dbReference>
<dbReference type="PIR" id="S50007">
    <property type="entry name" value="S50007"/>
</dbReference>
<dbReference type="RefSeq" id="NP_733646.1">
    <property type="nucleotide sequence ID" value="NC_003888.3"/>
</dbReference>
<dbReference type="RefSeq" id="WP_011029826.1">
    <property type="nucleotide sequence ID" value="NZ_VNID01000016.1"/>
</dbReference>
<dbReference type="SMR" id="P43414"/>
<dbReference type="FunCoup" id="P43414">
    <property type="interactions" value="490"/>
</dbReference>
<dbReference type="STRING" id="100226.gene:17762372"/>
<dbReference type="PaxDb" id="100226-SCO4723"/>
<dbReference type="KEGG" id="sco:SCO4723"/>
<dbReference type="PATRIC" id="fig|100226.15.peg.4794"/>
<dbReference type="eggNOG" id="COG0563">
    <property type="taxonomic scope" value="Bacteria"/>
</dbReference>
<dbReference type="HOGENOM" id="CLU_032354_1_2_11"/>
<dbReference type="InParanoid" id="P43414"/>
<dbReference type="OrthoDB" id="9805030at2"/>
<dbReference type="PhylomeDB" id="P43414"/>
<dbReference type="UniPathway" id="UPA00588">
    <property type="reaction ID" value="UER00649"/>
</dbReference>
<dbReference type="Proteomes" id="UP000001973">
    <property type="component" value="Chromosome"/>
</dbReference>
<dbReference type="GO" id="GO:0005737">
    <property type="term" value="C:cytoplasm"/>
    <property type="evidence" value="ECO:0000318"/>
    <property type="project" value="GO_Central"/>
</dbReference>
<dbReference type="GO" id="GO:0005829">
    <property type="term" value="C:cytosol"/>
    <property type="evidence" value="ECO:0000318"/>
    <property type="project" value="GO_Central"/>
</dbReference>
<dbReference type="GO" id="GO:0004017">
    <property type="term" value="F:adenylate kinase activity"/>
    <property type="evidence" value="ECO:0000318"/>
    <property type="project" value="GO_Central"/>
</dbReference>
<dbReference type="GO" id="GO:0005524">
    <property type="term" value="F:ATP binding"/>
    <property type="evidence" value="ECO:0007669"/>
    <property type="project" value="UniProtKB-UniRule"/>
</dbReference>
<dbReference type="GO" id="GO:0004550">
    <property type="term" value="F:nucleoside diphosphate kinase activity"/>
    <property type="evidence" value="ECO:0000318"/>
    <property type="project" value="GO_Central"/>
</dbReference>
<dbReference type="GO" id="GO:0044209">
    <property type="term" value="P:AMP salvage"/>
    <property type="evidence" value="ECO:0007669"/>
    <property type="project" value="UniProtKB-UniRule"/>
</dbReference>
<dbReference type="GO" id="GO:0009132">
    <property type="term" value="P:nucleoside diphosphate metabolic process"/>
    <property type="evidence" value="ECO:0000318"/>
    <property type="project" value="GO_Central"/>
</dbReference>
<dbReference type="GO" id="GO:0009123">
    <property type="term" value="P:nucleoside monophosphate metabolic process"/>
    <property type="evidence" value="ECO:0000318"/>
    <property type="project" value="GO_Central"/>
</dbReference>
<dbReference type="CDD" id="cd01428">
    <property type="entry name" value="ADK"/>
    <property type="match status" value="1"/>
</dbReference>
<dbReference type="FunFam" id="3.40.50.300:FF:000106">
    <property type="entry name" value="Adenylate kinase mitochondrial"/>
    <property type="match status" value="1"/>
</dbReference>
<dbReference type="Gene3D" id="3.40.50.300">
    <property type="entry name" value="P-loop containing nucleotide triphosphate hydrolases"/>
    <property type="match status" value="1"/>
</dbReference>
<dbReference type="HAMAP" id="MF_00235">
    <property type="entry name" value="Adenylate_kinase_Adk"/>
    <property type="match status" value="1"/>
</dbReference>
<dbReference type="InterPro" id="IPR006259">
    <property type="entry name" value="Adenyl_kin_sub"/>
</dbReference>
<dbReference type="InterPro" id="IPR000850">
    <property type="entry name" value="Adenylat/UMP-CMP_kin"/>
</dbReference>
<dbReference type="InterPro" id="IPR033690">
    <property type="entry name" value="Adenylat_kinase_CS"/>
</dbReference>
<dbReference type="InterPro" id="IPR007862">
    <property type="entry name" value="Adenylate_kinase_lid-dom"/>
</dbReference>
<dbReference type="InterPro" id="IPR008144">
    <property type="entry name" value="Guanylate_kin-like_dom"/>
</dbReference>
<dbReference type="InterPro" id="IPR027417">
    <property type="entry name" value="P-loop_NTPase"/>
</dbReference>
<dbReference type="NCBIfam" id="TIGR01351">
    <property type="entry name" value="adk"/>
    <property type="match status" value="1"/>
</dbReference>
<dbReference type="NCBIfam" id="NF001380">
    <property type="entry name" value="PRK00279.1-2"/>
    <property type="match status" value="1"/>
</dbReference>
<dbReference type="NCBIfam" id="NF001381">
    <property type="entry name" value="PRK00279.1-3"/>
    <property type="match status" value="1"/>
</dbReference>
<dbReference type="NCBIfam" id="NF011100">
    <property type="entry name" value="PRK14527.1"/>
    <property type="match status" value="1"/>
</dbReference>
<dbReference type="PANTHER" id="PTHR23359">
    <property type="entry name" value="NUCLEOTIDE KINASE"/>
    <property type="match status" value="1"/>
</dbReference>
<dbReference type="Pfam" id="PF00406">
    <property type="entry name" value="ADK"/>
    <property type="match status" value="1"/>
</dbReference>
<dbReference type="Pfam" id="PF05191">
    <property type="entry name" value="ADK_lid"/>
    <property type="match status" value="1"/>
</dbReference>
<dbReference type="PRINTS" id="PR00094">
    <property type="entry name" value="ADENYLTKNASE"/>
</dbReference>
<dbReference type="SUPFAM" id="SSF52540">
    <property type="entry name" value="P-loop containing nucleoside triphosphate hydrolases"/>
    <property type="match status" value="1"/>
</dbReference>
<dbReference type="PROSITE" id="PS00113">
    <property type="entry name" value="ADENYLATE_KINASE"/>
    <property type="match status" value="1"/>
</dbReference>
<keyword id="KW-0067">ATP-binding</keyword>
<keyword id="KW-0963">Cytoplasm</keyword>
<keyword id="KW-0418">Kinase</keyword>
<keyword id="KW-0545">Nucleotide biosynthesis</keyword>
<keyword id="KW-0547">Nucleotide-binding</keyword>
<keyword id="KW-1185">Reference proteome</keyword>
<keyword id="KW-0808">Transferase</keyword>
<reference key="1">
    <citation type="submission" date="1998-02" db="EMBL/GenBank/DDBJ databases">
        <authorList>
            <person name="Loriaux A."/>
            <person name="Brans A."/>
            <person name="Dusart J."/>
        </authorList>
    </citation>
    <scope>NUCLEOTIDE SEQUENCE [GENOMIC DNA]</scope>
    <source>
        <strain>A3(2) / NRRL B-16638</strain>
    </source>
</reference>
<reference key="2">
    <citation type="journal article" date="2002" name="Nature">
        <title>Complete genome sequence of the model actinomycete Streptomyces coelicolor A3(2).</title>
        <authorList>
            <person name="Bentley S.D."/>
            <person name="Chater K.F."/>
            <person name="Cerdeno-Tarraga A.-M."/>
            <person name="Challis G.L."/>
            <person name="Thomson N.R."/>
            <person name="James K.D."/>
            <person name="Harris D.E."/>
            <person name="Quail M.A."/>
            <person name="Kieser H."/>
            <person name="Harper D."/>
            <person name="Bateman A."/>
            <person name="Brown S."/>
            <person name="Chandra G."/>
            <person name="Chen C.W."/>
            <person name="Collins M."/>
            <person name="Cronin A."/>
            <person name="Fraser A."/>
            <person name="Goble A."/>
            <person name="Hidalgo J."/>
            <person name="Hornsby T."/>
            <person name="Howarth S."/>
            <person name="Huang C.-H."/>
            <person name="Kieser T."/>
            <person name="Larke L."/>
            <person name="Murphy L.D."/>
            <person name="Oliver K."/>
            <person name="O'Neil S."/>
            <person name="Rabbinowitsch E."/>
            <person name="Rajandream M.A."/>
            <person name="Rutherford K.M."/>
            <person name="Rutter S."/>
            <person name="Seeger K."/>
            <person name="Saunders D."/>
            <person name="Sharp S."/>
            <person name="Squares R."/>
            <person name="Squares S."/>
            <person name="Taylor K."/>
            <person name="Warren T."/>
            <person name="Wietzorrek A."/>
            <person name="Woodward J.R."/>
            <person name="Barrell B.G."/>
            <person name="Parkhill J."/>
            <person name="Hopwood D.A."/>
        </authorList>
    </citation>
    <scope>NUCLEOTIDE SEQUENCE [LARGE SCALE GENOMIC DNA]</scope>
    <source>
        <strain>ATCC BAA-471 / A3(2) / M145</strain>
    </source>
</reference>
<organism>
    <name type="scientific">Streptomyces coelicolor (strain ATCC BAA-471 / A3(2) / M145)</name>
    <dbReference type="NCBI Taxonomy" id="100226"/>
    <lineage>
        <taxon>Bacteria</taxon>
        <taxon>Bacillati</taxon>
        <taxon>Actinomycetota</taxon>
        <taxon>Actinomycetes</taxon>
        <taxon>Kitasatosporales</taxon>
        <taxon>Streptomycetaceae</taxon>
        <taxon>Streptomyces</taxon>
        <taxon>Streptomyces albidoflavus group</taxon>
    </lineage>
</organism>
<feature type="chain" id="PRO_0000158856" description="Adenylate kinase">
    <location>
        <begin position="1"/>
        <end position="217"/>
    </location>
</feature>
<feature type="region of interest" description="NMP" evidence="1">
    <location>
        <begin position="30"/>
        <end position="59"/>
    </location>
</feature>
<feature type="region of interest" description="LID" evidence="1">
    <location>
        <begin position="126"/>
        <end position="164"/>
    </location>
</feature>
<feature type="binding site" evidence="1">
    <location>
        <begin position="10"/>
        <end position="15"/>
    </location>
    <ligand>
        <name>ATP</name>
        <dbReference type="ChEBI" id="CHEBI:30616"/>
    </ligand>
</feature>
<feature type="binding site" evidence="1">
    <location>
        <position position="31"/>
    </location>
    <ligand>
        <name>AMP</name>
        <dbReference type="ChEBI" id="CHEBI:456215"/>
    </ligand>
</feature>
<feature type="binding site" evidence="1">
    <location>
        <position position="36"/>
    </location>
    <ligand>
        <name>AMP</name>
        <dbReference type="ChEBI" id="CHEBI:456215"/>
    </ligand>
</feature>
<feature type="binding site" evidence="1">
    <location>
        <begin position="57"/>
        <end position="59"/>
    </location>
    <ligand>
        <name>AMP</name>
        <dbReference type="ChEBI" id="CHEBI:456215"/>
    </ligand>
</feature>
<feature type="binding site" evidence="1">
    <location>
        <begin position="85"/>
        <end position="88"/>
    </location>
    <ligand>
        <name>AMP</name>
        <dbReference type="ChEBI" id="CHEBI:456215"/>
    </ligand>
</feature>
<feature type="binding site" evidence="1">
    <location>
        <position position="92"/>
    </location>
    <ligand>
        <name>AMP</name>
        <dbReference type="ChEBI" id="CHEBI:456215"/>
    </ligand>
</feature>
<feature type="binding site" evidence="1">
    <location>
        <position position="127"/>
    </location>
    <ligand>
        <name>ATP</name>
        <dbReference type="ChEBI" id="CHEBI:30616"/>
    </ligand>
</feature>
<feature type="binding site" evidence="1">
    <location>
        <begin position="137"/>
        <end position="138"/>
    </location>
    <ligand>
        <name>ATP</name>
        <dbReference type="ChEBI" id="CHEBI:30616"/>
    </ligand>
</feature>
<feature type="binding site" evidence="1">
    <location>
        <position position="161"/>
    </location>
    <ligand>
        <name>AMP</name>
        <dbReference type="ChEBI" id="CHEBI:456215"/>
    </ligand>
</feature>
<feature type="binding site" evidence="1">
    <location>
        <position position="172"/>
    </location>
    <ligand>
        <name>AMP</name>
        <dbReference type="ChEBI" id="CHEBI:456215"/>
    </ligand>
</feature>
<feature type="binding site" evidence="1">
    <location>
        <position position="200"/>
    </location>
    <ligand>
        <name>ATP</name>
        <dbReference type="ChEBI" id="CHEBI:30616"/>
    </ligand>
</feature>
<feature type="sequence conflict" description="In Ref. 1; CAA58138." evidence="2" ref="1">
    <original>LKRD</original>
    <variation>PSAN</variation>
    <location>
        <begin position="213"/>
        <end position="216"/>
    </location>
</feature>
<name>KAD_STRCO</name>
<accession>P43414</accession>
<accession>O86771</accession>
<accession>Q9L0C1</accession>
<sequence length="217" mass="23985">MRIVLVGPPGAGKGTQATRLAETLHIPHISTGDLFRANISQQTELGKLAKSYMNAGNLVPDEVTIAMAKDRMEQPDAEGGFLLDGFPRNVSQAEALDELLETEGMKLDAVLDLEAPEDEVVKRIAGRRVCRNEPKHVFHVTYTPPKKEGVCDVCGGELYQRDDDSEETVRKRLEVYHTQTEPIIDYYKSQGLVATIAATGPVDEVTRRALEALKRDQ</sequence>
<protein>
    <recommendedName>
        <fullName evidence="1">Adenylate kinase</fullName>
        <shortName evidence="1">AK</shortName>
        <ecNumber evidence="1">2.7.4.3</ecNumber>
    </recommendedName>
    <alternativeName>
        <fullName evidence="1">ATP-AMP transphosphorylase</fullName>
    </alternativeName>
    <alternativeName>
        <fullName evidence="1">ATP:AMP phosphotransferase</fullName>
    </alternativeName>
    <alternativeName>
        <fullName evidence="1">Adenylate monophosphate kinase</fullName>
    </alternativeName>
</protein>
<gene>
    <name evidence="1" type="primary">adk</name>
    <name type="ordered locus">SCO4723</name>
    <name type="ORF">SC6G4.01</name>
    <name type="ORF">SCD31.48</name>
</gene>
<comment type="function">
    <text evidence="1">Catalyzes the reversible transfer of the terminal phosphate group between ATP and AMP. Plays an important role in cellular energy homeostasis and in adenine nucleotide metabolism.</text>
</comment>
<comment type="catalytic activity">
    <reaction evidence="1">
        <text>AMP + ATP = 2 ADP</text>
        <dbReference type="Rhea" id="RHEA:12973"/>
        <dbReference type="ChEBI" id="CHEBI:30616"/>
        <dbReference type="ChEBI" id="CHEBI:456215"/>
        <dbReference type="ChEBI" id="CHEBI:456216"/>
        <dbReference type="EC" id="2.7.4.3"/>
    </reaction>
</comment>
<comment type="pathway">
    <text evidence="1">Purine metabolism; AMP biosynthesis via salvage pathway; AMP from ADP: step 1/1.</text>
</comment>
<comment type="subunit">
    <text evidence="1">Monomer.</text>
</comment>
<comment type="subcellular location">
    <subcellularLocation>
        <location evidence="1">Cytoplasm</location>
    </subcellularLocation>
</comment>
<comment type="domain">
    <text evidence="1">Consists of three domains, a large central CORE domain and two small peripheral domains, NMPbind and LID, which undergo movements during catalysis. The LID domain closes over the site of phosphoryl transfer upon ATP binding. Assembling and dissambling the active center during each catalytic cycle provides an effective means to prevent ATP hydrolysis.</text>
</comment>
<comment type="similarity">
    <text evidence="1">Belongs to the adenylate kinase family.</text>
</comment>
<evidence type="ECO:0000255" key="1">
    <source>
        <dbReference type="HAMAP-Rule" id="MF_00235"/>
    </source>
</evidence>
<evidence type="ECO:0000305" key="2"/>